<sequence>MTAQQHLSRRRMLGMAAFGAAALAGGTTIAAPRAAAAAKSAADNGGYVPAVVIGTGYGAAVSALRLGEAGVQTLMLEMGQLWNQPGPDGNIFCGMLNPDKRSSWFKNRTEAPLGSFLWLDVVNRNIDPYAGVLDRVNYDQMSVYVGRGVGGGSLVNGGMAVEPKRSYFEEILPRVDSSEMYDRYFPRANSMLRVNHIDTKWFEDTEWYKFARVSREQAGKAGLGTVFVPNVYDFGYMQREAAGEVPKSALATEVIYGNNHGKQSLDKTYLAAALGTGKVTIQTLHQVKTIRQTKDGGYALTVEQKDTDGKLLATKEISCRYLFLGAGSLGSTELLVRARDTGTLPNLNSEVGAGWGPNGNIMTARANHMWNPTGAHQSSIPALGIDAWDNSDSSVFAEIAPMPAGLETWVSLYLAITKNPQRGTFVYDAATDRAKLNWTRDQNAPAVNAAKALFDRINKANGTIYRYDLFGTQLKAFADDFCYHPLGGCVLGKATDDYGRVAGYKNLYVTDGSLIPGSVGVNPFVTITALAERNVERIIKQDVTAS</sequence>
<evidence type="ECO:0000255" key="1">
    <source>
        <dbReference type="PROSITE-ProRule" id="PRU00648"/>
    </source>
</evidence>
<evidence type="ECO:0000269" key="2">
    <source>
    </source>
</evidence>
<evidence type="ECO:0000269" key="3">
    <source>
    </source>
</evidence>
<evidence type="ECO:0000269" key="4">
    <source>
    </source>
</evidence>
<evidence type="ECO:0000303" key="5">
    <source>
    </source>
</evidence>
<evidence type="ECO:0000305" key="6"/>
<evidence type="ECO:0000305" key="7">
    <source>
    </source>
</evidence>
<evidence type="ECO:0000305" key="8">
    <source>
    </source>
</evidence>
<evidence type="ECO:0007744" key="9">
    <source>
        <dbReference type="PDB" id="1B4V"/>
    </source>
</evidence>
<evidence type="ECO:0007744" key="10">
    <source>
        <dbReference type="PDB" id="1B8S"/>
    </source>
</evidence>
<evidence type="ECO:0007744" key="11">
    <source>
        <dbReference type="PDB" id="1CBO"/>
    </source>
</evidence>
<evidence type="ECO:0007744" key="12">
    <source>
        <dbReference type="PDB" id="1CC2"/>
    </source>
</evidence>
<evidence type="ECO:0007829" key="13">
    <source>
        <dbReference type="PDB" id="1N4W"/>
    </source>
</evidence>
<evidence type="ECO:0007829" key="14">
    <source>
        <dbReference type="PDB" id="3B3R"/>
    </source>
</evidence>
<evidence type="ECO:0007829" key="15">
    <source>
        <dbReference type="PDB" id="4REK"/>
    </source>
</evidence>
<evidence type="ECO:0007829" key="16">
    <source>
        <dbReference type="PDB" id="4U2T"/>
    </source>
</evidence>
<protein>
    <recommendedName>
        <fullName evidence="5">Cholesterol oxidase</fullName>
        <shortName>CHOD</shortName>
        <ecNumber evidence="4">1.1.3.6</ecNumber>
    </recommendedName>
    <alternativeName>
        <fullName>Cholesterol isomerase</fullName>
        <ecNumber evidence="4">5.3.3.1</ecNumber>
    </alternativeName>
</protein>
<accession>P12676</accession>
<dbReference type="EC" id="1.1.3.6" evidence="4"/>
<dbReference type="EC" id="5.3.3.1" evidence="4"/>
<dbReference type="EMBL" id="M31939">
    <property type="protein sequence ID" value="AAA26719.1"/>
    <property type="molecule type" value="Genomic_DNA"/>
</dbReference>
<dbReference type="PIR" id="A32260">
    <property type="entry name" value="A32260"/>
</dbReference>
<dbReference type="PDB" id="1B4V">
    <property type="method" value="X-ray"/>
    <property type="resolution" value="1.50 A"/>
    <property type="chains" value="A=43-546"/>
</dbReference>
<dbReference type="PDB" id="1B8S">
    <property type="method" value="X-ray"/>
    <property type="resolution" value="1.65 A"/>
    <property type="chains" value="A=43-546"/>
</dbReference>
<dbReference type="PDB" id="1CBO">
    <property type="method" value="X-ray"/>
    <property type="resolution" value="1.80 A"/>
    <property type="chains" value="A=43-546"/>
</dbReference>
<dbReference type="PDB" id="1CC2">
    <property type="method" value="X-ray"/>
    <property type="resolution" value="2.20 A"/>
    <property type="chains" value="A=43-546"/>
</dbReference>
<dbReference type="PDB" id="1IJH">
    <property type="method" value="X-ray"/>
    <property type="resolution" value="1.53 A"/>
    <property type="chains" value="A=43-546"/>
</dbReference>
<dbReference type="PDB" id="1MXT">
    <property type="method" value="X-ray"/>
    <property type="resolution" value="0.95 A"/>
    <property type="chains" value="A=43-546"/>
</dbReference>
<dbReference type="PDB" id="1N1P">
    <property type="method" value="X-ray"/>
    <property type="resolution" value="0.95 A"/>
    <property type="chains" value="A=43-546"/>
</dbReference>
<dbReference type="PDB" id="1N4U">
    <property type="method" value="X-ray"/>
    <property type="resolution" value="0.95 A"/>
    <property type="chains" value="A=43-546"/>
</dbReference>
<dbReference type="PDB" id="1N4V">
    <property type="method" value="X-ray"/>
    <property type="resolution" value="1.00 A"/>
    <property type="chains" value="A=43-546"/>
</dbReference>
<dbReference type="PDB" id="1N4W">
    <property type="method" value="X-ray"/>
    <property type="resolution" value="0.92 A"/>
    <property type="chains" value="A=43-546"/>
</dbReference>
<dbReference type="PDB" id="2GEW">
    <property type="method" value="X-ray"/>
    <property type="resolution" value="0.97 A"/>
    <property type="chains" value="A=43-546"/>
</dbReference>
<dbReference type="PDB" id="3B3R">
    <property type="method" value="X-ray"/>
    <property type="resolution" value="0.98 A"/>
    <property type="chains" value="A=42-546"/>
</dbReference>
<dbReference type="PDB" id="3B6D">
    <property type="method" value="X-ray"/>
    <property type="resolution" value="1.20 A"/>
    <property type="chains" value="A=43-546"/>
</dbReference>
<dbReference type="PDB" id="3CNJ">
    <property type="method" value="X-ray"/>
    <property type="resolution" value="0.95 A"/>
    <property type="chains" value="A=45-543"/>
</dbReference>
<dbReference type="PDB" id="3GYI">
    <property type="method" value="X-ray"/>
    <property type="resolution" value="1.00 A"/>
    <property type="chains" value="A=43-546"/>
</dbReference>
<dbReference type="PDB" id="3GYJ">
    <property type="method" value="X-ray"/>
    <property type="resolution" value="0.92 A"/>
    <property type="chains" value="A=43-546"/>
</dbReference>
<dbReference type="PDB" id="4REK">
    <property type="method" value="X-ray"/>
    <property type="resolution" value="0.74 A"/>
    <property type="chains" value="A=46-544"/>
</dbReference>
<dbReference type="PDB" id="4U2L">
    <property type="method" value="X-ray"/>
    <property type="resolution" value="1.34 A"/>
    <property type="chains" value="A=43-546"/>
</dbReference>
<dbReference type="PDB" id="4U2S">
    <property type="method" value="X-ray"/>
    <property type="resolution" value="1.12 A"/>
    <property type="chains" value="A=43-546"/>
</dbReference>
<dbReference type="PDB" id="4U2T">
    <property type="method" value="X-ray"/>
    <property type="resolution" value="1.22 A"/>
    <property type="chains" value="A=43-546"/>
</dbReference>
<dbReference type="PDB" id="4XWR">
    <property type="method" value="X-ray"/>
    <property type="resolution" value="1.10 A"/>
    <property type="chains" value="A=43-546"/>
</dbReference>
<dbReference type="PDB" id="4XXG">
    <property type="method" value="X-ray"/>
    <property type="resolution" value="0.85 A"/>
    <property type="chains" value="A=43-546"/>
</dbReference>
<dbReference type="PDB" id="5KWF">
    <property type="method" value="Other"/>
    <property type="resolution" value="1.50 A"/>
    <property type="chains" value="A=43-546"/>
</dbReference>
<dbReference type="PDBsum" id="1B4V"/>
<dbReference type="PDBsum" id="1B8S"/>
<dbReference type="PDBsum" id="1CBO"/>
<dbReference type="PDBsum" id="1CC2"/>
<dbReference type="PDBsum" id="1IJH"/>
<dbReference type="PDBsum" id="1MXT"/>
<dbReference type="PDBsum" id="1N1P"/>
<dbReference type="PDBsum" id="1N4U"/>
<dbReference type="PDBsum" id="1N4V"/>
<dbReference type="PDBsum" id="1N4W"/>
<dbReference type="PDBsum" id="2GEW"/>
<dbReference type="PDBsum" id="3B3R"/>
<dbReference type="PDBsum" id="3B6D"/>
<dbReference type="PDBsum" id="3CNJ"/>
<dbReference type="PDBsum" id="3GYI"/>
<dbReference type="PDBsum" id="3GYJ"/>
<dbReference type="PDBsum" id="4REK"/>
<dbReference type="PDBsum" id="4U2L"/>
<dbReference type="PDBsum" id="4U2S"/>
<dbReference type="PDBsum" id="4U2T"/>
<dbReference type="PDBsum" id="4XWR"/>
<dbReference type="PDBsum" id="4XXG"/>
<dbReference type="PDBsum" id="5KWF"/>
<dbReference type="SMR" id="P12676"/>
<dbReference type="DrugBank" id="DB03147">
    <property type="generic name" value="Flavin adenine dinucleotide"/>
</dbReference>
<dbReference type="DrugBank" id="DB02332">
    <property type="generic name" value="Flavin-N7 protonated-adenine dinucleotide"/>
</dbReference>
<dbReference type="BRENDA" id="1.1.3.6">
    <property type="organism ID" value="1284"/>
</dbReference>
<dbReference type="UniPathway" id="UPA01058"/>
<dbReference type="EvolutionaryTrace" id="P12676"/>
<dbReference type="GO" id="GO:0005576">
    <property type="term" value="C:extracellular region"/>
    <property type="evidence" value="ECO:0007669"/>
    <property type="project" value="UniProtKB-SubCell"/>
</dbReference>
<dbReference type="GO" id="GO:0016995">
    <property type="term" value="F:cholesterol oxidase activity"/>
    <property type="evidence" value="ECO:0007669"/>
    <property type="project" value="UniProtKB-EC"/>
</dbReference>
<dbReference type="GO" id="GO:0050660">
    <property type="term" value="F:flavin adenine dinucleotide binding"/>
    <property type="evidence" value="ECO:0007669"/>
    <property type="project" value="InterPro"/>
</dbReference>
<dbReference type="GO" id="GO:0004769">
    <property type="term" value="F:steroid Delta-isomerase activity"/>
    <property type="evidence" value="ECO:0007669"/>
    <property type="project" value="UniProtKB-EC"/>
</dbReference>
<dbReference type="GO" id="GO:0006707">
    <property type="term" value="P:cholesterol catabolic process"/>
    <property type="evidence" value="ECO:0007669"/>
    <property type="project" value="UniProtKB-UniPathway"/>
</dbReference>
<dbReference type="Gene3D" id="3.30.410.10">
    <property type="entry name" value="Cholesterol Oxidase, domain 2"/>
    <property type="match status" value="1"/>
</dbReference>
<dbReference type="Gene3D" id="3.50.50.60">
    <property type="entry name" value="FAD/NAD(P)-binding domain"/>
    <property type="match status" value="1"/>
</dbReference>
<dbReference type="InterPro" id="IPR052542">
    <property type="entry name" value="Cholesterol_Oxidase"/>
</dbReference>
<dbReference type="InterPro" id="IPR036188">
    <property type="entry name" value="FAD/NAD-bd_sf"/>
</dbReference>
<dbReference type="InterPro" id="IPR000172">
    <property type="entry name" value="GMC_OxRdtase_N"/>
</dbReference>
<dbReference type="InterPro" id="IPR007867">
    <property type="entry name" value="GMC_OxRtase_C"/>
</dbReference>
<dbReference type="InterPro" id="IPR006311">
    <property type="entry name" value="TAT_signal"/>
</dbReference>
<dbReference type="PANTHER" id="PTHR47470">
    <property type="entry name" value="CHOLESTEROL OXIDASE"/>
    <property type="match status" value="1"/>
</dbReference>
<dbReference type="PANTHER" id="PTHR47470:SF1">
    <property type="entry name" value="FAD-DEPENDENT OXIDOREDUCTASE 2 FAD BINDING DOMAIN-CONTAINING PROTEIN"/>
    <property type="match status" value="1"/>
</dbReference>
<dbReference type="Pfam" id="PF05199">
    <property type="entry name" value="GMC_oxred_C"/>
    <property type="match status" value="1"/>
</dbReference>
<dbReference type="Pfam" id="PF22500">
    <property type="entry name" value="GMC_oxred_C_1st"/>
    <property type="match status" value="1"/>
</dbReference>
<dbReference type="Pfam" id="PF00732">
    <property type="entry name" value="GMC_oxred_N"/>
    <property type="match status" value="1"/>
</dbReference>
<dbReference type="SUPFAM" id="SSF54373">
    <property type="entry name" value="FAD-linked reductases, C-terminal domain"/>
    <property type="match status" value="1"/>
</dbReference>
<dbReference type="SUPFAM" id="SSF51905">
    <property type="entry name" value="FAD/NAD(P)-binding domain"/>
    <property type="match status" value="1"/>
</dbReference>
<dbReference type="PROSITE" id="PS00623">
    <property type="entry name" value="GMC_OXRED_1"/>
    <property type="match status" value="1"/>
</dbReference>
<dbReference type="PROSITE" id="PS51318">
    <property type="entry name" value="TAT"/>
    <property type="match status" value="1"/>
</dbReference>
<proteinExistence type="evidence at protein level"/>
<organism>
    <name type="scientific">Streptomyces sp. (strain SA-COO)</name>
    <dbReference type="NCBI Taxonomy" id="74576"/>
    <lineage>
        <taxon>Bacteria</taxon>
        <taxon>Bacillati</taxon>
        <taxon>Actinomycetota</taxon>
        <taxon>Actinomycetes</taxon>
        <taxon>Kitasatosporales</taxon>
        <taxon>Streptomycetaceae</taxon>
        <taxon>Streptomyces</taxon>
    </lineage>
</organism>
<keyword id="KW-0002">3D-structure</keyword>
<keyword id="KW-0153">Cholesterol metabolism</keyword>
<keyword id="KW-0903">Direct protein sequencing</keyword>
<keyword id="KW-0274">FAD</keyword>
<keyword id="KW-0285">Flavoprotein</keyword>
<keyword id="KW-0413">Isomerase</keyword>
<keyword id="KW-0443">Lipid metabolism</keyword>
<keyword id="KW-0560">Oxidoreductase</keyword>
<keyword id="KW-0964">Secreted</keyword>
<keyword id="KW-0732">Signal</keyword>
<keyword id="KW-0753">Steroid metabolism</keyword>
<keyword id="KW-1207">Sterol metabolism</keyword>
<feature type="signal peptide" description="Tat-type signal" evidence="3">
    <location>
        <begin position="1"/>
        <end position="42"/>
    </location>
</feature>
<feature type="chain" id="PRO_0000012333" description="Cholesterol oxidase">
    <location>
        <begin position="43"/>
        <end position="546"/>
    </location>
</feature>
<feature type="active site" description="Proton acceptor" evidence="7">
    <location>
        <position position="398"/>
    </location>
</feature>
<feature type="active site" description="Proton acceptor" evidence="7">
    <location>
        <position position="484"/>
    </location>
</feature>
<feature type="binding site" evidence="2 9">
    <location>
        <position position="57"/>
    </location>
    <ligand>
        <name>FAD</name>
        <dbReference type="ChEBI" id="CHEBI:57692"/>
    </ligand>
</feature>
<feature type="binding site" evidence="2 9">
    <location>
        <position position="58"/>
    </location>
    <ligand>
        <name>FAD</name>
        <dbReference type="ChEBI" id="CHEBI:57692"/>
    </ligand>
</feature>
<feature type="binding site" evidence="2 9">
    <location>
        <position position="77"/>
    </location>
    <ligand>
        <name>FAD</name>
        <dbReference type="ChEBI" id="CHEBI:57692"/>
    </ligand>
</feature>
<feature type="binding site" evidence="2 9">
    <location>
        <position position="152"/>
    </location>
    <ligand>
        <name>FAD</name>
        <dbReference type="ChEBI" id="CHEBI:57692"/>
    </ligand>
</feature>
<feature type="binding site" evidence="2 9">
    <location>
        <position position="156"/>
    </location>
    <ligand>
        <name>FAD</name>
        <dbReference type="ChEBI" id="CHEBI:57692"/>
    </ligand>
</feature>
<feature type="binding site" evidence="2 9">
    <location>
        <position position="157"/>
    </location>
    <ligand>
        <name>FAD</name>
        <dbReference type="ChEBI" id="CHEBI:57692"/>
    </ligand>
</feature>
<feature type="binding site" evidence="2 9">
    <location>
        <position position="159"/>
    </location>
    <ligand>
        <name>FAD</name>
        <dbReference type="ChEBI" id="CHEBI:57692"/>
    </ligand>
</feature>
<feature type="binding site" evidence="2 9">
    <location>
        <position position="287"/>
    </location>
    <ligand>
        <name>FAD</name>
        <dbReference type="ChEBI" id="CHEBI:57692"/>
    </ligand>
</feature>
<feature type="binding site" evidence="2 9">
    <location>
        <position position="512"/>
    </location>
    <ligand>
        <name>FAD</name>
        <dbReference type="ChEBI" id="CHEBI:57692"/>
    </ligand>
</feature>
<feature type="binding site" evidence="2 9">
    <location>
        <position position="524"/>
    </location>
    <ligand>
        <name>FAD</name>
        <dbReference type="ChEBI" id="CHEBI:57692"/>
    </ligand>
</feature>
<feature type="mutagenesis site" description="Mutant does not catalyze isomerization (&gt;10000-fold reduced), and oxidation activity is 30-fold lower than wild type." evidence="4">
    <original>E</original>
    <variation>Q</variation>
    <location>
        <position position="398"/>
    </location>
</feature>
<feature type="mutagenesis site" description="Mutants do not catalyze oxidation (&gt;100000-fold reduced), but do catalyze isomerization, 10000 times slower than wild type." evidence="4">
    <original>H</original>
    <variation>D</variation>
    <variation>E</variation>
    <location>
        <position position="484"/>
    </location>
</feature>
<feature type="mutagenesis site" description="Mutant is inactive in both oxidation (&gt;100000-fold reduced) and isomerization assays (&gt;10000-fold reduced)." evidence="4">
    <original>H</original>
    <variation>K</variation>
    <location>
        <position position="484"/>
    </location>
</feature>
<feature type="mutagenesis site" description="Mutant activity is 4400-fold lower than wild type for oxidation, and is 30-fold lower than wild type for isomerization." evidence="4">
    <original>H</original>
    <variation>N</variation>
    <location>
        <position position="484"/>
    </location>
</feature>
<feature type="mutagenesis site" description="Mutant activity is 120-fold lower than wild type for oxidation, and the same as wild type for isomerization." evidence="4">
    <original>H</original>
    <variation>Q</variation>
    <location>
        <position position="484"/>
    </location>
</feature>
<feature type="turn" evidence="14">
    <location>
        <begin position="42"/>
        <end position="44"/>
    </location>
</feature>
<feature type="strand" evidence="15">
    <location>
        <begin position="47"/>
        <end position="53"/>
    </location>
</feature>
<feature type="helix" evidence="15">
    <location>
        <begin position="57"/>
        <end position="68"/>
    </location>
</feature>
<feature type="strand" evidence="15">
    <location>
        <begin position="73"/>
        <end position="79"/>
    </location>
</feature>
<feature type="strand" evidence="15">
    <location>
        <begin position="89"/>
        <end position="92"/>
    </location>
</feature>
<feature type="strand" evidence="16">
    <location>
        <begin position="95"/>
        <end position="97"/>
    </location>
</feature>
<feature type="helix" evidence="15">
    <location>
        <begin position="100"/>
        <end position="102"/>
    </location>
</feature>
<feature type="strand" evidence="15">
    <location>
        <begin position="103"/>
        <end position="105"/>
    </location>
</feature>
<feature type="helix" evidence="15">
    <location>
        <begin position="116"/>
        <end position="119"/>
    </location>
</feature>
<feature type="helix" evidence="15">
    <location>
        <begin position="120"/>
        <end position="122"/>
    </location>
</feature>
<feature type="strand" evidence="15">
    <location>
        <begin position="132"/>
        <end position="137"/>
    </location>
</feature>
<feature type="strand" evidence="15">
    <location>
        <begin position="142"/>
        <end position="146"/>
    </location>
</feature>
<feature type="helix" evidence="15">
    <location>
        <begin position="151"/>
        <end position="154"/>
    </location>
</feature>
<feature type="helix" evidence="15">
    <location>
        <begin position="165"/>
        <end position="171"/>
    </location>
</feature>
<feature type="helix" evidence="15">
    <location>
        <begin position="177"/>
        <end position="182"/>
    </location>
</feature>
<feature type="helix" evidence="15">
    <location>
        <begin position="184"/>
        <end position="191"/>
    </location>
</feature>
<feature type="helix" evidence="15">
    <location>
        <begin position="199"/>
        <end position="204"/>
    </location>
</feature>
<feature type="helix" evidence="15">
    <location>
        <begin position="206"/>
        <end position="208"/>
    </location>
</feature>
<feature type="helix" evidence="15">
    <location>
        <begin position="209"/>
        <end position="220"/>
    </location>
</feature>
<feature type="strand" evidence="15">
    <location>
        <begin position="225"/>
        <end position="227"/>
    </location>
</feature>
<feature type="strand" evidence="15">
    <location>
        <begin position="230"/>
        <end position="232"/>
    </location>
</feature>
<feature type="helix" evidence="15">
    <location>
        <begin position="234"/>
        <end position="241"/>
    </location>
</feature>
<feature type="helix" evidence="15">
    <location>
        <begin position="249"/>
        <end position="251"/>
    </location>
</feature>
<feature type="strand" evidence="15">
    <location>
        <begin position="259"/>
        <end position="262"/>
    </location>
</feature>
<feature type="turn" evidence="15">
    <location>
        <begin position="265"/>
        <end position="268"/>
    </location>
</feature>
<feature type="helix" evidence="15">
    <location>
        <begin position="269"/>
        <end position="275"/>
    </location>
</feature>
<feature type="strand" evidence="15">
    <location>
        <begin position="278"/>
        <end position="292"/>
    </location>
</feature>
<feature type="strand" evidence="15">
    <location>
        <begin position="296"/>
        <end position="305"/>
    </location>
</feature>
<feature type="strand" evidence="15">
    <location>
        <begin position="311"/>
        <end position="324"/>
    </location>
</feature>
<feature type="helix" evidence="15">
    <location>
        <begin position="327"/>
        <end position="340"/>
    </location>
</feature>
<feature type="turn" evidence="15">
    <location>
        <begin position="349"/>
        <end position="352"/>
    </location>
</feature>
<feature type="strand" evidence="15">
    <location>
        <begin position="361"/>
        <end position="366"/>
    </location>
</feature>
<feature type="strand" evidence="15">
    <location>
        <begin position="383"/>
        <end position="387"/>
    </location>
</feature>
<feature type="strand" evidence="15">
    <location>
        <begin position="395"/>
        <end position="400"/>
    </location>
</feature>
<feature type="strand" evidence="15">
    <location>
        <begin position="410"/>
        <end position="417"/>
    </location>
</feature>
<feature type="strand" evidence="15">
    <location>
        <begin position="425"/>
        <end position="428"/>
    </location>
</feature>
<feature type="turn" evidence="15">
    <location>
        <begin position="429"/>
        <end position="432"/>
    </location>
</feature>
<feature type="strand" evidence="15">
    <location>
        <begin position="433"/>
        <end position="436"/>
    </location>
</feature>
<feature type="helix" evidence="15">
    <location>
        <begin position="440"/>
        <end position="443"/>
    </location>
</feature>
<feature type="helix" evidence="15">
    <location>
        <begin position="444"/>
        <end position="461"/>
    </location>
</feature>
<feature type="strand" evidence="13">
    <location>
        <begin position="468"/>
        <end position="473"/>
    </location>
</feature>
<feature type="strand" evidence="15">
    <location>
        <begin position="476"/>
        <end position="478"/>
    </location>
</feature>
<feature type="strand" evidence="15">
    <location>
        <begin position="480"/>
        <end position="484"/>
    </location>
</feature>
<feature type="turn" evidence="15">
    <location>
        <begin position="491"/>
        <end position="493"/>
    </location>
</feature>
<feature type="strand" evidence="15">
    <location>
        <begin position="499"/>
        <end position="501"/>
    </location>
</feature>
<feature type="strand" evidence="15">
    <location>
        <begin position="505"/>
        <end position="509"/>
    </location>
</feature>
<feature type="helix" evidence="15">
    <location>
        <begin position="512"/>
        <end position="514"/>
    </location>
</feature>
<feature type="helix" evidence="15">
    <location>
        <begin position="524"/>
        <end position="542"/>
    </location>
</feature>
<comment type="function">
    <text evidence="4">Bifunctional enzyme that catalyzes the oxidation and isomerization of cholesterol to cholestenone (cholest-4-en-3-one), an initial step in the cholesterol degradation process (PubMed:9922167). The cholesterol degradation pathway allows the bacterium to utilize cholesterol as its sole source of carbon and energy (PubMed:9922167).</text>
</comment>
<comment type="catalytic activity">
    <reaction evidence="4">
        <text>cholesterol + O2 = cholest-5-en-3-one + H2O2</text>
        <dbReference type="Rhea" id="RHEA:32183"/>
        <dbReference type="ChEBI" id="CHEBI:15379"/>
        <dbReference type="ChEBI" id="CHEBI:16113"/>
        <dbReference type="ChEBI" id="CHEBI:16240"/>
        <dbReference type="ChEBI" id="CHEBI:63906"/>
        <dbReference type="EC" id="1.1.3.6"/>
    </reaction>
    <physiologicalReaction direction="left-to-right" evidence="8">
        <dbReference type="Rhea" id="RHEA:32184"/>
    </physiologicalReaction>
</comment>
<comment type="catalytic activity">
    <reaction evidence="4">
        <text>cholest-5-en-3-one = cholest-4-en-3-one</text>
        <dbReference type="Rhea" id="RHEA:32187"/>
        <dbReference type="ChEBI" id="CHEBI:16175"/>
        <dbReference type="ChEBI" id="CHEBI:63906"/>
        <dbReference type="EC" id="5.3.3.1"/>
    </reaction>
    <physiologicalReaction direction="left-to-right" evidence="8">
        <dbReference type="Rhea" id="RHEA:32188"/>
    </physiologicalReaction>
</comment>
<comment type="cofactor">
    <cofactor evidence="2">
        <name>FAD</name>
        <dbReference type="ChEBI" id="CHEBI:57692"/>
    </cofactor>
</comment>
<comment type="biophysicochemical properties">
    <kinetics>
        <KM evidence="4">3 uM for cholesterol</KM>
        <KM evidence="4">6.2 uM for cholest-5-en-3-one</KM>
        <text evidence="4">kcat is 44 sec(-1) for the oxidation of cholesterol. kcat is 64 sec(-1) for the isomerization of cholest-5-en-3-one.</text>
    </kinetics>
</comment>
<comment type="pathway">
    <text evidence="8">Steroid metabolism; cholesterol degradation.</text>
</comment>
<comment type="subunit">
    <text evidence="2">Monomer.</text>
</comment>
<comment type="subcellular location">
    <subcellularLocation>
        <location evidence="3">Secreted</location>
    </subcellularLocation>
</comment>
<comment type="PTM">
    <text evidence="1 3">Predicted to be exported by the Tat system. The position of the signal peptide cleavage has been experimentally proven.</text>
</comment>
<comment type="similarity">
    <text evidence="6">Belongs to the GMC oxidoreductase family.</text>
</comment>
<reference key="1">
    <citation type="journal article" date="1989" name="J. Bacteriol.">
        <title>Nucleotide sequence of the gene for cholesterol oxidase from a Streptomyces sp.</title>
        <authorList>
            <person name="Ishizaki T."/>
            <person name="Hirayama N."/>
            <person name="Shinkawa H."/>
            <person name="Nimi O."/>
            <person name="Murooka Y."/>
        </authorList>
    </citation>
    <scope>NUCLEOTIDE SEQUENCE [GENOMIC DNA]</scope>
    <scope>PROTEIN SEQUENCE OF 43-63</scope>
    <scope>SUBCELLULAR LOCATION</scope>
</reference>
<reference key="2">
    <citation type="journal article" date="1998" name="Biochemistry">
        <title>Evaluation of the role of His447 in the reaction catalyzed by cholesterol oxidase.</title>
        <authorList>
            <person name="Kass I.J."/>
            <person name="Sampson N.S."/>
        </authorList>
    </citation>
    <scope>FUNCTION</scope>
    <scope>CATALYTIC ACTIVITY</scope>
    <scope>BIOPHYSICOCHEMICAL PROPERTIES</scope>
    <scope>MUTAGENESIS OF GLU-398 AND HIS-484</scope>
</reference>
<reference evidence="9 10 11 12" key="3">
    <citation type="journal article" date="1999" name="Biochemistry">
        <title>Crystal structure determination of cholesterol oxidase from Streptomyces and structural characterization of key active site mutants.</title>
        <authorList>
            <person name="Yue Q.K."/>
            <person name="Kass I.J."/>
            <person name="Sampson N.S."/>
            <person name="Vrielink A."/>
        </authorList>
    </citation>
    <scope>X-RAY CRYSTALLOGRAPHY (1.5 ANGSTROMS) OF WILD-TYPE AND MUTANTS GLN-398; ASN-484 AND GLN-484 IN COMPLEX WITH FAD</scope>
    <scope>COFACTOR</scope>
    <scope>SUBUNIT</scope>
    <scope>ACTIVE SITE</scope>
</reference>
<name>CHOD_STRS0</name>
<gene>
    <name evidence="5" type="primary">choA</name>
</gene>